<proteinExistence type="inferred from homology"/>
<reference key="1">
    <citation type="journal article" date="2008" name="J. Bacteriol.">
        <title>The complete genome sequence of Actinobacillus pleuropneumoniae L20 (serotype 5b).</title>
        <authorList>
            <person name="Foote S.J."/>
            <person name="Bosse J.T."/>
            <person name="Bouevitch A.B."/>
            <person name="Langford P.R."/>
            <person name="Young N.M."/>
            <person name="Nash J.H.E."/>
        </authorList>
    </citation>
    <scope>NUCLEOTIDE SEQUENCE [LARGE SCALE GENOMIC DNA]</scope>
    <source>
        <strain>L20</strain>
    </source>
</reference>
<organism>
    <name type="scientific">Actinobacillus pleuropneumoniae serotype 5b (strain L20)</name>
    <dbReference type="NCBI Taxonomy" id="416269"/>
    <lineage>
        <taxon>Bacteria</taxon>
        <taxon>Pseudomonadati</taxon>
        <taxon>Pseudomonadota</taxon>
        <taxon>Gammaproteobacteria</taxon>
        <taxon>Pasteurellales</taxon>
        <taxon>Pasteurellaceae</taxon>
        <taxon>Actinobacillus</taxon>
    </lineage>
</organism>
<feature type="chain" id="PRO_1000001866" description="Glutamate--tRNA ligase">
    <location>
        <begin position="1"/>
        <end position="479"/>
    </location>
</feature>
<feature type="short sequence motif" description="'HIGH' region" evidence="1">
    <location>
        <begin position="21"/>
        <end position="31"/>
    </location>
</feature>
<feature type="short sequence motif" description="'KMSKS' region" evidence="1">
    <location>
        <begin position="248"/>
        <end position="252"/>
    </location>
</feature>
<feature type="binding site" evidence="1">
    <location>
        <position position="251"/>
    </location>
    <ligand>
        <name>ATP</name>
        <dbReference type="ChEBI" id="CHEBI:30616"/>
    </ligand>
</feature>
<gene>
    <name evidence="1" type="primary">gltX</name>
    <name type="ordered locus">APL_1275</name>
</gene>
<accession>A3N1S5</accession>
<name>SYE_ACTP2</name>
<protein>
    <recommendedName>
        <fullName evidence="1">Glutamate--tRNA ligase</fullName>
        <ecNumber evidence="1">6.1.1.17</ecNumber>
    </recommendedName>
    <alternativeName>
        <fullName evidence="1">Glutamyl-tRNA synthetase</fullName>
        <shortName evidence="1">GluRS</shortName>
    </alternativeName>
</protein>
<comment type="function">
    <text evidence="1">Catalyzes the attachment of glutamate to tRNA(Glu) in a two-step reaction: glutamate is first activated by ATP to form Glu-AMP and then transferred to the acceptor end of tRNA(Glu).</text>
</comment>
<comment type="catalytic activity">
    <reaction evidence="1">
        <text>tRNA(Glu) + L-glutamate + ATP = L-glutamyl-tRNA(Glu) + AMP + diphosphate</text>
        <dbReference type="Rhea" id="RHEA:23540"/>
        <dbReference type="Rhea" id="RHEA-COMP:9663"/>
        <dbReference type="Rhea" id="RHEA-COMP:9680"/>
        <dbReference type="ChEBI" id="CHEBI:29985"/>
        <dbReference type="ChEBI" id="CHEBI:30616"/>
        <dbReference type="ChEBI" id="CHEBI:33019"/>
        <dbReference type="ChEBI" id="CHEBI:78442"/>
        <dbReference type="ChEBI" id="CHEBI:78520"/>
        <dbReference type="ChEBI" id="CHEBI:456215"/>
        <dbReference type="EC" id="6.1.1.17"/>
    </reaction>
</comment>
<comment type="subunit">
    <text evidence="1">Monomer.</text>
</comment>
<comment type="subcellular location">
    <subcellularLocation>
        <location evidence="1">Cytoplasm</location>
    </subcellularLocation>
</comment>
<comment type="similarity">
    <text evidence="1">Belongs to the class-I aminoacyl-tRNA synthetase family. Glutamate--tRNA ligase type 1 subfamily.</text>
</comment>
<evidence type="ECO:0000255" key="1">
    <source>
        <dbReference type="HAMAP-Rule" id="MF_00022"/>
    </source>
</evidence>
<dbReference type="EC" id="6.1.1.17" evidence="1"/>
<dbReference type="EMBL" id="CP000569">
    <property type="protein sequence ID" value="ABN74361.1"/>
    <property type="molecule type" value="Genomic_DNA"/>
</dbReference>
<dbReference type="RefSeq" id="WP_011848558.1">
    <property type="nucleotide sequence ID" value="NC_009053.1"/>
</dbReference>
<dbReference type="SMR" id="A3N1S5"/>
<dbReference type="STRING" id="416269.APL_1275"/>
<dbReference type="EnsemblBacteria" id="ABN74361">
    <property type="protein sequence ID" value="ABN74361"/>
    <property type="gene ID" value="APL_1275"/>
</dbReference>
<dbReference type="KEGG" id="apl:APL_1275"/>
<dbReference type="PATRIC" id="fig|416269.6.peg.1331"/>
<dbReference type="eggNOG" id="COG0008">
    <property type="taxonomic scope" value="Bacteria"/>
</dbReference>
<dbReference type="HOGENOM" id="CLU_015768_6_0_6"/>
<dbReference type="Proteomes" id="UP000001432">
    <property type="component" value="Chromosome"/>
</dbReference>
<dbReference type="GO" id="GO:0005829">
    <property type="term" value="C:cytosol"/>
    <property type="evidence" value="ECO:0007669"/>
    <property type="project" value="TreeGrafter"/>
</dbReference>
<dbReference type="GO" id="GO:0005524">
    <property type="term" value="F:ATP binding"/>
    <property type="evidence" value="ECO:0007669"/>
    <property type="project" value="UniProtKB-UniRule"/>
</dbReference>
<dbReference type="GO" id="GO:0004818">
    <property type="term" value="F:glutamate-tRNA ligase activity"/>
    <property type="evidence" value="ECO:0007669"/>
    <property type="project" value="UniProtKB-UniRule"/>
</dbReference>
<dbReference type="GO" id="GO:0000049">
    <property type="term" value="F:tRNA binding"/>
    <property type="evidence" value="ECO:0007669"/>
    <property type="project" value="InterPro"/>
</dbReference>
<dbReference type="GO" id="GO:0008270">
    <property type="term" value="F:zinc ion binding"/>
    <property type="evidence" value="ECO:0007669"/>
    <property type="project" value="InterPro"/>
</dbReference>
<dbReference type="GO" id="GO:0006424">
    <property type="term" value="P:glutamyl-tRNA aminoacylation"/>
    <property type="evidence" value="ECO:0007669"/>
    <property type="project" value="UniProtKB-UniRule"/>
</dbReference>
<dbReference type="CDD" id="cd00808">
    <property type="entry name" value="GluRS_core"/>
    <property type="match status" value="1"/>
</dbReference>
<dbReference type="FunFam" id="3.40.50.620:FF:000007">
    <property type="entry name" value="Glutamate--tRNA ligase"/>
    <property type="match status" value="1"/>
</dbReference>
<dbReference type="Gene3D" id="1.10.10.350">
    <property type="match status" value="1"/>
</dbReference>
<dbReference type="Gene3D" id="3.40.50.620">
    <property type="entry name" value="HUPs"/>
    <property type="match status" value="1"/>
</dbReference>
<dbReference type="HAMAP" id="MF_00022">
    <property type="entry name" value="Glu_tRNA_synth_type1"/>
    <property type="match status" value="1"/>
</dbReference>
<dbReference type="InterPro" id="IPR045462">
    <property type="entry name" value="aa-tRNA-synth_I_cd-bd"/>
</dbReference>
<dbReference type="InterPro" id="IPR020751">
    <property type="entry name" value="aa-tRNA-synth_I_codon-bd_sub2"/>
</dbReference>
<dbReference type="InterPro" id="IPR001412">
    <property type="entry name" value="aa-tRNA-synth_I_CS"/>
</dbReference>
<dbReference type="InterPro" id="IPR008925">
    <property type="entry name" value="aa_tRNA-synth_I_cd-bd_sf"/>
</dbReference>
<dbReference type="InterPro" id="IPR004527">
    <property type="entry name" value="Glu-tRNA-ligase_bac/mito"/>
</dbReference>
<dbReference type="InterPro" id="IPR000924">
    <property type="entry name" value="Glu/Gln-tRNA-synth"/>
</dbReference>
<dbReference type="InterPro" id="IPR020058">
    <property type="entry name" value="Glu/Gln-tRNA-synth_Ib_cat-dom"/>
</dbReference>
<dbReference type="InterPro" id="IPR049940">
    <property type="entry name" value="GluQ/Sye"/>
</dbReference>
<dbReference type="InterPro" id="IPR033910">
    <property type="entry name" value="GluRS_core"/>
</dbReference>
<dbReference type="InterPro" id="IPR014729">
    <property type="entry name" value="Rossmann-like_a/b/a_fold"/>
</dbReference>
<dbReference type="NCBIfam" id="TIGR00464">
    <property type="entry name" value="gltX_bact"/>
    <property type="match status" value="1"/>
</dbReference>
<dbReference type="PANTHER" id="PTHR43311">
    <property type="entry name" value="GLUTAMATE--TRNA LIGASE"/>
    <property type="match status" value="1"/>
</dbReference>
<dbReference type="PANTHER" id="PTHR43311:SF2">
    <property type="entry name" value="GLUTAMATE--TRNA LIGASE, MITOCHONDRIAL-RELATED"/>
    <property type="match status" value="1"/>
</dbReference>
<dbReference type="Pfam" id="PF19269">
    <property type="entry name" value="Anticodon_2"/>
    <property type="match status" value="1"/>
</dbReference>
<dbReference type="Pfam" id="PF00749">
    <property type="entry name" value="tRNA-synt_1c"/>
    <property type="match status" value="1"/>
</dbReference>
<dbReference type="PRINTS" id="PR00987">
    <property type="entry name" value="TRNASYNTHGLU"/>
</dbReference>
<dbReference type="SUPFAM" id="SSF48163">
    <property type="entry name" value="An anticodon-binding domain of class I aminoacyl-tRNA synthetases"/>
    <property type="match status" value="1"/>
</dbReference>
<dbReference type="SUPFAM" id="SSF52374">
    <property type="entry name" value="Nucleotidylyl transferase"/>
    <property type="match status" value="1"/>
</dbReference>
<dbReference type="PROSITE" id="PS00178">
    <property type="entry name" value="AA_TRNA_LIGASE_I"/>
    <property type="match status" value="1"/>
</dbReference>
<keyword id="KW-0030">Aminoacyl-tRNA synthetase</keyword>
<keyword id="KW-0067">ATP-binding</keyword>
<keyword id="KW-0963">Cytoplasm</keyword>
<keyword id="KW-0436">Ligase</keyword>
<keyword id="KW-0547">Nucleotide-binding</keyword>
<keyword id="KW-0648">Protein biosynthesis</keyword>
<keyword id="KW-1185">Reference proteome</keyword>
<sequence length="479" mass="54190">MNIETLFPLDPNVKVRTRFAPSPTGYLHVGGARTALSSWLYAKHFNGEFVLRIEDTDLERSTPEATAAILEGMEWLNLAWEHGPYYQTKRFDRYNQVIDQMIEQGLAYRCYCSKERLENLRHEQEANKEKPRYDRHCLAHHDQPTDAPHVVRFKNPQEGSVVFDDAVRGRIEISNSELDDLIIRRTDGSPTYNFCVVVDDWDMGITHVVRGEDHINNTPRQINILKALGAPIPTYAHVSMINGDDGQKLSKRHGAVSVMQYRDDGYLPEALINYLVRLGWGHGDQEIFSREEMIELFDIHSVSKSASAFNTDKLQWLNQHYMRSLPAEHVAKYLAWHMNDQAIDTSSGPALEEIIPVLSERAKTLKELAAASRYFYQEFDGYDEKAAAKNFKAEAVAPLAKLLEKLTALTDWSVEAIHDAMNATAADLEIGMGKVGMPFRLAVTGSGQSPSMDITAKLVGRERTLARIQKAIEFIQAQA</sequence>